<comment type="function">
    <text evidence="1">Catalyzes the thiamine diphosphate-dependent decarboxylation of 2-oxoglutarate and the subsequent addition of the resulting succinic semialdehyde-thiamine pyrophosphate anion to isochorismate to yield 2-succinyl-5-enolpyruvyl-6-hydroxy-3-cyclohexene-1-carboxylate (SEPHCHC).</text>
</comment>
<comment type="catalytic activity">
    <reaction evidence="1">
        <text>isochorismate + 2-oxoglutarate + H(+) = 5-enolpyruvoyl-6-hydroxy-2-succinyl-cyclohex-3-ene-1-carboxylate + CO2</text>
        <dbReference type="Rhea" id="RHEA:25593"/>
        <dbReference type="ChEBI" id="CHEBI:15378"/>
        <dbReference type="ChEBI" id="CHEBI:16526"/>
        <dbReference type="ChEBI" id="CHEBI:16810"/>
        <dbReference type="ChEBI" id="CHEBI:29780"/>
        <dbReference type="ChEBI" id="CHEBI:58818"/>
        <dbReference type="EC" id="2.2.1.9"/>
    </reaction>
</comment>
<comment type="cofactor">
    <cofactor evidence="1">
        <name>Mg(2+)</name>
        <dbReference type="ChEBI" id="CHEBI:18420"/>
    </cofactor>
    <cofactor evidence="1">
        <name>Mn(2+)</name>
        <dbReference type="ChEBI" id="CHEBI:29035"/>
    </cofactor>
</comment>
<comment type="cofactor">
    <cofactor evidence="1">
        <name>thiamine diphosphate</name>
        <dbReference type="ChEBI" id="CHEBI:58937"/>
    </cofactor>
    <text evidence="1">Binds 1 thiamine pyrophosphate per subunit.</text>
</comment>
<comment type="pathway">
    <text evidence="1">Quinol/quinone metabolism; 1,4-dihydroxy-2-naphthoate biosynthesis; 1,4-dihydroxy-2-naphthoate from chorismate: step 2/7.</text>
</comment>
<comment type="pathway">
    <text evidence="1">Cofactor biosynthesis; phylloquinone biosynthesis.</text>
</comment>
<comment type="subunit">
    <text evidence="1">Homodimer.</text>
</comment>
<comment type="similarity">
    <text evidence="1">Belongs to the TPP enzyme family. MenD subfamily.</text>
</comment>
<accession>Q46LU3</accession>
<sequence>MTISLARYNFFISLELLKTLVAKGVKYFVLCPGSRSGPLALAAASLSKRKELTLITSIDERSAAFLALGISAASGQVSCVITTSGSAVANLLPAAVEADRSCHPLLFLTADRPLRLKECGANQAVNQQDFLKSVCRHFDESPKEGIHLISKERLTSLVGKSFEMASNIPGPVHINLAYEEPLHPCELDQKKVLDGWVIEGFLKGKITPTKDEVVKSFQSLKLLKLDPFSLGIIIVGPWRGKVKQLNSFRGALKKWQKLTGWPILADPLSGVENDQEGLINHWDLFFSIGLFEKIKEIQVLRLGPIPPSRELQTWLKKPGKFQLLITEGDSRNLDPIGGSTQFSEGFSCWVDKMLEVIPVKPAIDKKIVSKKLIKELIKYDLFIHDWLDKRLFRNGLITEPALARLLPRLLPESIPVMIASSSPIRDWLSYSGEGAFLRRCFGFRGASGIDGTLSMGMGLSIIMGRMVLVTGDLALLHDTNGWLFSKDKNISLIVIMIDNGGGGIFNQLNIDRIEEGDFEDIFLMPQQVCHLTLAKAYGLKYKQVACLDDLEKAIEWSFSLSTNVLIRVCTNSIEDHRLRVNLSDDLKKTLSENLSSFD</sequence>
<name>MEND_PROMT</name>
<protein>
    <recommendedName>
        <fullName evidence="1">2-succinyl-5-enolpyruvyl-6-hydroxy-3-cyclohexene-1-carboxylate synthase</fullName>
        <shortName evidence="1">SEPHCHC synthase</shortName>
        <ecNumber evidence="1">2.2.1.9</ecNumber>
    </recommendedName>
</protein>
<keyword id="KW-0460">Magnesium</keyword>
<keyword id="KW-0464">Manganese</keyword>
<keyword id="KW-0479">Metal-binding</keyword>
<keyword id="KW-1185">Reference proteome</keyword>
<keyword id="KW-0786">Thiamine pyrophosphate</keyword>
<keyword id="KW-0808">Transferase</keyword>
<proteinExistence type="inferred from homology"/>
<gene>
    <name evidence="1" type="primary">menD</name>
    <name type="ordered locus">PMN2A_0043</name>
</gene>
<organism>
    <name type="scientific">Prochlorococcus marinus (strain NATL2A)</name>
    <dbReference type="NCBI Taxonomy" id="59920"/>
    <lineage>
        <taxon>Bacteria</taxon>
        <taxon>Bacillati</taxon>
        <taxon>Cyanobacteriota</taxon>
        <taxon>Cyanophyceae</taxon>
        <taxon>Synechococcales</taxon>
        <taxon>Prochlorococcaceae</taxon>
        <taxon>Prochlorococcus</taxon>
    </lineage>
</organism>
<evidence type="ECO:0000255" key="1">
    <source>
        <dbReference type="HAMAP-Rule" id="MF_01659"/>
    </source>
</evidence>
<reference key="1">
    <citation type="journal article" date="2007" name="PLoS Genet.">
        <title>Patterns and implications of gene gain and loss in the evolution of Prochlorococcus.</title>
        <authorList>
            <person name="Kettler G.C."/>
            <person name="Martiny A.C."/>
            <person name="Huang K."/>
            <person name="Zucker J."/>
            <person name="Coleman M.L."/>
            <person name="Rodrigue S."/>
            <person name="Chen F."/>
            <person name="Lapidus A."/>
            <person name="Ferriera S."/>
            <person name="Johnson J."/>
            <person name="Steglich C."/>
            <person name="Church G.M."/>
            <person name="Richardson P."/>
            <person name="Chisholm S.W."/>
        </authorList>
    </citation>
    <scope>NUCLEOTIDE SEQUENCE [LARGE SCALE GENOMIC DNA]</scope>
    <source>
        <strain>NATL2A</strain>
    </source>
</reference>
<feature type="chain" id="PRO_0000341807" description="2-succinyl-5-enolpyruvyl-6-hydroxy-3-cyclohexene-1-carboxylate synthase">
    <location>
        <begin position="1"/>
        <end position="598"/>
    </location>
</feature>
<dbReference type="EC" id="2.2.1.9" evidence="1"/>
<dbReference type="EMBL" id="CP000095">
    <property type="protein sequence ID" value="AAZ57535.1"/>
    <property type="molecule type" value="Genomic_DNA"/>
</dbReference>
<dbReference type="RefSeq" id="WP_011293577.1">
    <property type="nucleotide sequence ID" value="NC_007335.2"/>
</dbReference>
<dbReference type="SMR" id="Q46LU3"/>
<dbReference type="STRING" id="59920.PMN2A_0043"/>
<dbReference type="KEGG" id="pmn:PMN2A_0043"/>
<dbReference type="HOGENOM" id="CLU_006051_3_0_3"/>
<dbReference type="OrthoDB" id="9791859at2"/>
<dbReference type="PhylomeDB" id="Q46LU3"/>
<dbReference type="UniPathway" id="UPA00995"/>
<dbReference type="UniPathway" id="UPA01057">
    <property type="reaction ID" value="UER00164"/>
</dbReference>
<dbReference type="Proteomes" id="UP000002535">
    <property type="component" value="Chromosome"/>
</dbReference>
<dbReference type="GO" id="GO:0070204">
    <property type="term" value="F:2-succinyl-5-enolpyruvyl-6-hydroxy-3-cyclohexene-1-carboxylic-acid synthase activity"/>
    <property type="evidence" value="ECO:0007669"/>
    <property type="project" value="UniProtKB-UniRule"/>
</dbReference>
<dbReference type="GO" id="GO:0000287">
    <property type="term" value="F:magnesium ion binding"/>
    <property type="evidence" value="ECO:0007669"/>
    <property type="project" value="UniProtKB-UniRule"/>
</dbReference>
<dbReference type="GO" id="GO:0030145">
    <property type="term" value="F:manganese ion binding"/>
    <property type="evidence" value="ECO:0007669"/>
    <property type="project" value="UniProtKB-UniRule"/>
</dbReference>
<dbReference type="GO" id="GO:0030976">
    <property type="term" value="F:thiamine pyrophosphate binding"/>
    <property type="evidence" value="ECO:0007669"/>
    <property type="project" value="UniProtKB-UniRule"/>
</dbReference>
<dbReference type="GO" id="GO:0009234">
    <property type="term" value="P:menaquinone biosynthetic process"/>
    <property type="evidence" value="ECO:0007669"/>
    <property type="project" value="InterPro"/>
</dbReference>
<dbReference type="GO" id="GO:0042372">
    <property type="term" value="P:phylloquinone biosynthetic process"/>
    <property type="evidence" value="ECO:0007669"/>
    <property type="project" value="UniProtKB-UniRule"/>
</dbReference>
<dbReference type="CDD" id="cd07037">
    <property type="entry name" value="TPP_PYR_MenD"/>
    <property type="match status" value="1"/>
</dbReference>
<dbReference type="CDD" id="cd02009">
    <property type="entry name" value="TPP_SHCHC_synthase"/>
    <property type="match status" value="1"/>
</dbReference>
<dbReference type="Gene3D" id="3.40.50.970">
    <property type="match status" value="2"/>
</dbReference>
<dbReference type="Gene3D" id="3.40.50.1220">
    <property type="entry name" value="TPP-binding domain"/>
    <property type="match status" value="1"/>
</dbReference>
<dbReference type="HAMAP" id="MF_01659">
    <property type="entry name" value="MenD"/>
    <property type="match status" value="1"/>
</dbReference>
<dbReference type="InterPro" id="IPR004433">
    <property type="entry name" value="MenaQ_synth_MenD"/>
</dbReference>
<dbReference type="InterPro" id="IPR029061">
    <property type="entry name" value="THDP-binding"/>
</dbReference>
<dbReference type="InterPro" id="IPR012001">
    <property type="entry name" value="Thiamin_PyroP_enz_TPP-bd_dom"/>
</dbReference>
<dbReference type="InterPro" id="IPR011766">
    <property type="entry name" value="TPP_enzyme_TPP-bd"/>
</dbReference>
<dbReference type="NCBIfam" id="TIGR00173">
    <property type="entry name" value="menD"/>
    <property type="match status" value="1"/>
</dbReference>
<dbReference type="PANTHER" id="PTHR42916">
    <property type="entry name" value="2-SUCCINYL-5-ENOLPYRUVYL-6-HYDROXY-3-CYCLOHEXENE-1-CARBOXYLATE SYNTHASE"/>
    <property type="match status" value="1"/>
</dbReference>
<dbReference type="PANTHER" id="PTHR42916:SF1">
    <property type="entry name" value="PROTEIN PHYLLO, CHLOROPLASTIC"/>
    <property type="match status" value="1"/>
</dbReference>
<dbReference type="Pfam" id="PF02775">
    <property type="entry name" value="TPP_enzyme_C"/>
    <property type="match status" value="1"/>
</dbReference>
<dbReference type="Pfam" id="PF02776">
    <property type="entry name" value="TPP_enzyme_N"/>
    <property type="match status" value="1"/>
</dbReference>
<dbReference type="PIRSF" id="PIRSF004983">
    <property type="entry name" value="MenD"/>
    <property type="match status" value="1"/>
</dbReference>
<dbReference type="SUPFAM" id="SSF52518">
    <property type="entry name" value="Thiamin diphosphate-binding fold (THDP-binding)"/>
    <property type="match status" value="2"/>
</dbReference>